<organism>
    <name type="scientific">Synechococcus sp. (strain CC9902)</name>
    <dbReference type="NCBI Taxonomy" id="316279"/>
    <lineage>
        <taxon>Bacteria</taxon>
        <taxon>Bacillati</taxon>
        <taxon>Cyanobacteriota</taxon>
        <taxon>Cyanophyceae</taxon>
        <taxon>Synechococcales</taxon>
        <taxon>Synechococcaceae</taxon>
        <taxon>Synechococcus</taxon>
    </lineage>
</organism>
<proteinExistence type="inferred from homology"/>
<reference key="1">
    <citation type="submission" date="2005-08" db="EMBL/GenBank/DDBJ databases">
        <title>Complete sequence of Synechococcus sp. CC9902.</title>
        <authorList>
            <person name="Copeland A."/>
            <person name="Lucas S."/>
            <person name="Lapidus A."/>
            <person name="Barry K."/>
            <person name="Detter J.C."/>
            <person name="Glavina T."/>
            <person name="Hammon N."/>
            <person name="Israni S."/>
            <person name="Pitluck S."/>
            <person name="Martinez M."/>
            <person name="Schmutz J."/>
            <person name="Larimer F."/>
            <person name="Land M."/>
            <person name="Kyrpides N."/>
            <person name="Ivanova N."/>
            <person name="Richardson P."/>
        </authorList>
    </citation>
    <scope>NUCLEOTIDE SEQUENCE [LARGE SCALE GENOMIC DNA]</scope>
    <source>
        <strain>CC9902</strain>
    </source>
</reference>
<feature type="chain" id="PRO_0000375034" description="Ribosomal protein uS12 methylthiotransferase RimO">
    <location>
        <begin position="1"/>
        <end position="466"/>
    </location>
</feature>
<feature type="domain" description="MTTase N-terminal" evidence="1">
    <location>
        <begin position="16"/>
        <end position="127"/>
    </location>
</feature>
<feature type="domain" description="Radical SAM core" evidence="2">
    <location>
        <begin position="151"/>
        <end position="380"/>
    </location>
</feature>
<feature type="domain" description="TRAM" evidence="1">
    <location>
        <begin position="383"/>
        <end position="454"/>
    </location>
</feature>
<feature type="binding site" evidence="1">
    <location>
        <position position="25"/>
    </location>
    <ligand>
        <name>[4Fe-4S] cluster</name>
        <dbReference type="ChEBI" id="CHEBI:49883"/>
        <label>1</label>
    </ligand>
</feature>
<feature type="binding site" evidence="1">
    <location>
        <position position="61"/>
    </location>
    <ligand>
        <name>[4Fe-4S] cluster</name>
        <dbReference type="ChEBI" id="CHEBI:49883"/>
        <label>1</label>
    </ligand>
</feature>
<feature type="binding site" evidence="1">
    <location>
        <position position="90"/>
    </location>
    <ligand>
        <name>[4Fe-4S] cluster</name>
        <dbReference type="ChEBI" id="CHEBI:49883"/>
        <label>1</label>
    </ligand>
</feature>
<feature type="binding site" evidence="1">
    <location>
        <position position="165"/>
    </location>
    <ligand>
        <name>[4Fe-4S] cluster</name>
        <dbReference type="ChEBI" id="CHEBI:49883"/>
        <label>2</label>
        <note>4Fe-4S-S-AdoMet</note>
    </ligand>
</feature>
<feature type="binding site" evidence="1">
    <location>
        <position position="169"/>
    </location>
    <ligand>
        <name>[4Fe-4S] cluster</name>
        <dbReference type="ChEBI" id="CHEBI:49883"/>
        <label>2</label>
        <note>4Fe-4S-S-AdoMet</note>
    </ligand>
</feature>
<feature type="binding site" evidence="1">
    <location>
        <position position="172"/>
    </location>
    <ligand>
        <name>[4Fe-4S] cluster</name>
        <dbReference type="ChEBI" id="CHEBI:49883"/>
        <label>2</label>
        <note>4Fe-4S-S-AdoMet</note>
    </ligand>
</feature>
<protein>
    <recommendedName>
        <fullName evidence="1">Ribosomal protein uS12 methylthiotransferase RimO</fullName>
        <shortName evidence="1">uS12 MTTase</shortName>
        <shortName evidence="1">uS12 methylthiotransferase</shortName>
        <ecNumber evidence="1">2.8.4.4</ecNumber>
    </recommendedName>
    <alternativeName>
        <fullName evidence="1">Ribosomal protein uS12 (aspartate-C(3))-methylthiotransferase</fullName>
    </alternativeName>
    <alternativeName>
        <fullName evidence="1">Ribosome maturation factor RimO</fullName>
    </alternativeName>
</protein>
<accession>Q3B002</accession>
<name>RIMO_SYNS9</name>
<gene>
    <name evidence="1" type="primary">rimO</name>
    <name type="ordered locus">Syncc9902_0353</name>
</gene>
<evidence type="ECO:0000255" key="1">
    <source>
        <dbReference type="HAMAP-Rule" id="MF_01865"/>
    </source>
</evidence>
<evidence type="ECO:0000255" key="2">
    <source>
        <dbReference type="PROSITE-ProRule" id="PRU01266"/>
    </source>
</evidence>
<sequence>MTSTTTQPTTQPMAKPKVAFAHLGCEKNRVDTEHMVGLLAEAGYGVSTDEEDASVVVVNTCSFIQDAREESVRTLVGLAEQGKELIIAGCLAQHFQEELLESIPEAKAIVGTGDYQHIVDVLQRVEAGERVNRVSAVPSFVGDEHLPRQRTTDQAVAYLKVAEGCDYRCAFCIIPKLRGDQRSRPIESIVAEAHQLAEQGVQELILISQITTNYGLDLYGKPKLAELLRALGEVEIPWIRVHYAYPTGLTASVVAAYRDVPNVVPYLDLPLQHSHPDVLRAMNRPWQADVNERLLNEIREQLPDAVLRTTLIVGFPGETEEHFQHLKHFLETQRFDHVGIFTFSPEDGTAAADLPNRVDPDVAQARKDALMALQQPIAAERNQRWVGKTVDVLIEQHNPQTGEMIGRCARFAPEVDGEVHVQPGDDGQQAAPGSFVPVKITGADIYDLTGHIVGARSMVAEARVKD</sequence>
<comment type="function">
    <text evidence="1">Catalyzes the methylthiolation of an aspartic acid residue of ribosomal protein uS12.</text>
</comment>
<comment type="catalytic activity">
    <reaction evidence="1">
        <text>L-aspartate(89)-[ribosomal protein uS12]-hydrogen + (sulfur carrier)-SH + AH2 + 2 S-adenosyl-L-methionine = 3-methylsulfanyl-L-aspartate(89)-[ribosomal protein uS12]-hydrogen + (sulfur carrier)-H + 5'-deoxyadenosine + L-methionine + A + S-adenosyl-L-homocysteine + 2 H(+)</text>
        <dbReference type="Rhea" id="RHEA:37087"/>
        <dbReference type="Rhea" id="RHEA-COMP:10460"/>
        <dbReference type="Rhea" id="RHEA-COMP:10461"/>
        <dbReference type="Rhea" id="RHEA-COMP:14737"/>
        <dbReference type="Rhea" id="RHEA-COMP:14739"/>
        <dbReference type="ChEBI" id="CHEBI:13193"/>
        <dbReference type="ChEBI" id="CHEBI:15378"/>
        <dbReference type="ChEBI" id="CHEBI:17319"/>
        <dbReference type="ChEBI" id="CHEBI:17499"/>
        <dbReference type="ChEBI" id="CHEBI:29917"/>
        <dbReference type="ChEBI" id="CHEBI:29961"/>
        <dbReference type="ChEBI" id="CHEBI:57844"/>
        <dbReference type="ChEBI" id="CHEBI:57856"/>
        <dbReference type="ChEBI" id="CHEBI:59789"/>
        <dbReference type="ChEBI" id="CHEBI:64428"/>
        <dbReference type="ChEBI" id="CHEBI:73599"/>
        <dbReference type="EC" id="2.8.4.4"/>
    </reaction>
</comment>
<comment type="cofactor">
    <cofactor evidence="1">
        <name>[4Fe-4S] cluster</name>
        <dbReference type="ChEBI" id="CHEBI:49883"/>
    </cofactor>
    <text evidence="1">Binds 2 [4Fe-4S] clusters. One cluster is coordinated with 3 cysteines and an exchangeable S-adenosyl-L-methionine.</text>
</comment>
<comment type="subcellular location">
    <subcellularLocation>
        <location evidence="1">Cytoplasm</location>
    </subcellularLocation>
</comment>
<comment type="similarity">
    <text evidence="1">Belongs to the methylthiotransferase family. RimO subfamily.</text>
</comment>
<dbReference type="EC" id="2.8.4.4" evidence="1"/>
<dbReference type="EMBL" id="CP000097">
    <property type="protein sequence ID" value="ABB25325.1"/>
    <property type="molecule type" value="Genomic_DNA"/>
</dbReference>
<dbReference type="RefSeq" id="WP_011359182.1">
    <property type="nucleotide sequence ID" value="NC_007513.1"/>
</dbReference>
<dbReference type="SMR" id="Q3B002"/>
<dbReference type="STRING" id="316279.Syncc9902_0353"/>
<dbReference type="KEGG" id="sye:Syncc9902_0353"/>
<dbReference type="eggNOG" id="COG0621">
    <property type="taxonomic scope" value="Bacteria"/>
</dbReference>
<dbReference type="HOGENOM" id="CLU_018697_0_1_3"/>
<dbReference type="OrthoDB" id="9805215at2"/>
<dbReference type="Proteomes" id="UP000002712">
    <property type="component" value="Chromosome"/>
</dbReference>
<dbReference type="GO" id="GO:0005829">
    <property type="term" value="C:cytosol"/>
    <property type="evidence" value="ECO:0007669"/>
    <property type="project" value="TreeGrafter"/>
</dbReference>
<dbReference type="GO" id="GO:0051539">
    <property type="term" value="F:4 iron, 4 sulfur cluster binding"/>
    <property type="evidence" value="ECO:0007669"/>
    <property type="project" value="UniProtKB-UniRule"/>
</dbReference>
<dbReference type="GO" id="GO:0035599">
    <property type="term" value="F:aspartic acid methylthiotransferase activity"/>
    <property type="evidence" value="ECO:0007669"/>
    <property type="project" value="TreeGrafter"/>
</dbReference>
<dbReference type="GO" id="GO:0046872">
    <property type="term" value="F:metal ion binding"/>
    <property type="evidence" value="ECO:0007669"/>
    <property type="project" value="UniProtKB-KW"/>
</dbReference>
<dbReference type="GO" id="GO:0103039">
    <property type="term" value="F:protein methylthiotransferase activity"/>
    <property type="evidence" value="ECO:0007669"/>
    <property type="project" value="UniProtKB-EC"/>
</dbReference>
<dbReference type="GO" id="GO:0006400">
    <property type="term" value="P:tRNA modification"/>
    <property type="evidence" value="ECO:0007669"/>
    <property type="project" value="InterPro"/>
</dbReference>
<dbReference type="CDD" id="cd01335">
    <property type="entry name" value="Radical_SAM"/>
    <property type="match status" value="1"/>
</dbReference>
<dbReference type="FunFam" id="3.80.30.20:FF:000001">
    <property type="entry name" value="tRNA-2-methylthio-N(6)-dimethylallyladenosine synthase 2"/>
    <property type="match status" value="1"/>
</dbReference>
<dbReference type="Gene3D" id="3.40.50.12160">
    <property type="entry name" value="Methylthiotransferase, N-terminal domain"/>
    <property type="match status" value="1"/>
</dbReference>
<dbReference type="Gene3D" id="2.40.50.140">
    <property type="entry name" value="Nucleic acid-binding proteins"/>
    <property type="match status" value="1"/>
</dbReference>
<dbReference type="Gene3D" id="3.80.30.20">
    <property type="entry name" value="tm_1862 like domain"/>
    <property type="match status" value="1"/>
</dbReference>
<dbReference type="HAMAP" id="MF_01865">
    <property type="entry name" value="MTTase_RimO"/>
    <property type="match status" value="1"/>
</dbReference>
<dbReference type="InterPro" id="IPR006638">
    <property type="entry name" value="Elp3/MiaA/NifB-like_rSAM"/>
</dbReference>
<dbReference type="InterPro" id="IPR005839">
    <property type="entry name" value="Methylthiotransferase"/>
</dbReference>
<dbReference type="InterPro" id="IPR020612">
    <property type="entry name" value="Methylthiotransferase_CS"/>
</dbReference>
<dbReference type="InterPro" id="IPR013848">
    <property type="entry name" value="Methylthiotransferase_N"/>
</dbReference>
<dbReference type="InterPro" id="IPR038135">
    <property type="entry name" value="Methylthiotransferase_N_sf"/>
</dbReference>
<dbReference type="InterPro" id="IPR012340">
    <property type="entry name" value="NA-bd_OB-fold"/>
</dbReference>
<dbReference type="InterPro" id="IPR005840">
    <property type="entry name" value="Ribosomal_uS12_MeSTrfase_RimO"/>
</dbReference>
<dbReference type="InterPro" id="IPR007197">
    <property type="entry name" value="rSAM"/>
</dbReference>
<dbReference type="InterPro" id="IPR023404">
    <property type="entry name" value="rSAM_horseshoe"/>
</dbReference>
<dbReference type="InterPro" id="IPR002792">
    <property type="entry name" value="TRAM_dom"/>
</dbReference>
<dbReference type="NCBIfam" id="TIGR01125">
    <property type="entry name" value="30S ribosomal protein S12 methylthiotransferase RimO"/>
    <property type="match status" value="1"/>
</dbReference>
<dbReference type="NCBIfam" id="TIGR00089">
    <property type="entry name" value="MiaB/RimO family radical SAM methylthiotransferase"/>
    <property type="match status" value="1"/>
</dbReference>
<dbReference type="PANTHER" id="PTHR43837">
    <property type="entry name" value="RIBOSOMAL PROTEIN S12 METHYLTHIOTRANSFERASE RIMO"/>
    <property type="match status" value="1"/>
</dbReference>
<dbReference type="PANTHER" id="PTHR43837:SF1">
    <property type="entry name" value="RIBOSOMAL PROTEIN US12 METHYLTHIOTRANSFERASE RIMO"/>
    <property type="match status" value="1"/>
</dbReference>
<dbReference type="Pfam" id="PF04055">
    <property type="entry name" value="Radical_SAM"/>
    <property type="match status" value="1"/>
</dbReference>
<dbReference type="Pfam" id="PF18693">
    <property type="entry name" value="TRAM_2"/>
    <property type="match status" value="1"/>
</dbReference>
<dbReference type="Pfam" id="PF00919">
    <property type="entry name" value="UPF0004"/>
    <property type="match status" value="1"/>
</dbReference>
<dbReference type="SFLD" id="SFLDG01082">
    <property type="entry name" value="B12-binding_domain_containing"/>
    <property type="match status" value="1"/>
</dbReference>
<dbReference type="SFLD" id="SFLDS00029">
    <property type="entry name" value="Radical_SAM"/>
    <property type="match status" value="1"/>
</dbReference>
<dbReference type="SFLD" id="SFLDF00274">
    <property type="entry name" value="ribosomal_protein_S12_methylth"/>
    <property type="match status" value="1"/>
</dbReference>
<dbReference type="SMART" id="SM00729">
    <property type="entry name" value="Elp3"/>
    <property type="match status" value="1"/>
</dbReference>
<dbReference type="SUPFAM" id="SSF102114">
    <property type="entry name" value="Radical SAM enzymes"/>
    <property type="match status" value="1"/>
</dbReference>
<dbReference type="PROSITE" id="PS51449">
    <property type="entry name" value="MTTASE_N"/>
    <property type="match status" value="1"/>
</dbReference>
<dbReference type="PROSITE" id="PS01278">
    <property type="entry name" value="MTTASE_RADICAL"/>
    <property type="match status" value="1"/>
</dbReference>
<dbReference type="PROSITE" id="PS51918">
    <property type="entry name" value="RADICAL_SAM"/>
    <property type="match status" value="1"/>
</dbReference>
<dbReference type="PROSITE" id="PS50926">
    <property type="entry name" value="TRAM"/>
    <property type="match status" value="1"/>
</dbReference>
<keyword id="KW-0004">4Fe-4S</keyword>
<keyword id="KW-0963">Cytoplasm</keyword>
<keyword id="KW-0408">Iron</keyword>
<keyword id="KW-0411">Iron-sulfur</keyword>
<keyword id="KW-0479">Metal-binding</keyword>
<keyword id="KW-1185">Reference proteome</keyword>
<keyword id="KW-0949">S-adenosyl-L-methionine</keyword>
<keyword id="KW-0808">Transferase</keyword>